<protein>
    <recommendedName>
        <fullName evidence="4">Kunitz trypsin inhibitor 5</fullName>
        <shortName evidence="4">AtKTI5</shortName>
    </recommendedName>
    <alternativeName>
        <fullName evidence="5">Kunitz trypsin inhibitor 2</fullName>
        <shortName evidence="5">AtKTI2</shortName>
    </alternativeName>
</protein>
<reference key="1">
    <citation type="journal article" date="2000" name="Nature">
        <title>Sequence and analysis of chromosome 1 of the plant Arabidopsis thaliana.</title>
        <authorList>
            <person name="Theologis A."/>
            <person name="Ecker J.R."/>
            <person name="Palm C.J."/>
            <person name="Federspiel N.A."/>
            <person name="Kaul S."/>
            <person name="White O."/>
            <person name="Alonso J."/>
            <person name="Altafi H."/>
            <person name="Araujo R."/>
            <person name="Bowman C.L."/>
            <person name="Brooks S.Y."/>
            <person name="Buehler E."/>
            <person name="Chan A."/>
            <person name="Chao Q."/>
            <person name="Chen H."/>
            <person name="Cheuk R.F."/>
            <person name="Chin C.W."/>
            <person name="Chung M.K."/>
            <person name="Conn L."/>
            <person name="Conway A.B."/>
            <person name="Conway A.R."/>
            <person name="Creasy T.H."/>
            <person name="Dewar K."/>
            <person name="Dunn P."/>
            <person name="Etgu P."/>
            <person name="Feldblyum T.V."/>
            <person name="Feng J.-D."/>
            <person name="Fong B."/>
            <person name="Fujii C.Y."/>
            <person name="Gill J.E."/>
            <person name="Goldsmith A.D."/>
            <person name="Haas B."/>
            <person name="Hansen N.F."/>
            <person name="Hughes B."/>
            <person name="Huizar L."/>
            <person name="Hunter J.L."/>
            <person name="Jenkins J."/>
            <person name="Johnson-Hopson C."/>
            <person name="Khan S."/>
            <person name="Khaykin E."/>
            <person name="Kim C.J."/>
            <person name="Koo H.L."/>
            <person name="Kremenetskaia I."/>
            <person name="Kurtz D.B."/>
            <person name="Kwan A."/>
            <person name="Lam B."/>
            <person name="Langin-Hooper S."/>
            <person name="Lee A."/>
            <person name="Lee J.M."/>
            <person name="Lenz C.A."/>
            <person name="Li J.H."/>
            <person name="Li Y.-P."/>
            <person name="Lin X."/>
            <person name="Liu S.X."/>
            <person name="Liu Z.A."/>
            <person name="Luros J.S."/>
            <person name="Maiti R."/>
            <person name="Marziali A."/>
            <person name="Militscher J."/>
            <person name="Miranda M."/>
            <person name="Nguyen M."/>
            <person name="Nierman W.C."/>
            <person name="Osborne B.I."/>
            <person name="Pai G."/>
            <person name="Peterson J."/>
            <person name="Pham P.K."/>
            <person name="Rizzo M."/>
            <person name="Rooney T."/>
            <person name="Rowley D."/>
            <person name="Sakano H."/>
            <person name="Salzberg S.L."/>
            <person name="Schwartz J.R."/>
            <person name="Shinn P."/>
            <person name="Southwick A.M."/>
            <person name="Sun H."/>
            <person name="Tallon L.J."/>
            <person name="Tambunga G."/>
            <person name="Toriumi M.J."/>
            <person name="Town C.D."/>
            <person name="Utterback T."/>
            <person name="Van Aken S."/>
            <person name="Vaysberg M."/>
            <person name="Vysotskaia V.S."/>
            <person name="Walker M."/>
            <person name="Wu D."/>
            <person name="Yu G."/>
            <person name="Fraser C.M."/>
            <person name="Venter J.C."/>
            <person name="Davis R.W."/>
        </authorList>
    </citation>
    <scope>NUCLEOTIDE SEQUENCE [LARGE SCALE GENOMIC DNA]</scope>
    <source>
        <strain>cv. Columbia</strain>
    </source>
</reference>
<reference key="2">
    <citation type="journal article" date="2017" name="Plant J.">
        <title>Araport11: a complete reannotation of the Arabidopsis thaliana reference genome.</title>
        <authorList>
            <person name="Cheng C.Y."/>
            <person name="Krishnakumar V."/>
            <person name="Chan A.P."/>
            <person name="Thibaud-Nissen F."/>
            <person name="Schobel S."/>
            <person name="Town C.D."/>
        </authorList>
    </citation>
    <scope>GENOME REANNOTATION</scope>
    <source>
        <strain>cv. Columbia</strain>
    </source>
</reference>
<reference key="3">
    <citation type="journal article" date="2003" name="Science">
        <title>Empirical analysis of transcriptional activity in the Arabidopsis genome.</title>
        <authorList>
            <person name="Yamada K."/>
            <person name="Lim J."/>
            <person name="Dale J.M."/>
            <person name="Chen H."/>
            <person name="Shinn P."/>
            <person name="Palm C.J."/>
            <person name="Southwick A.M."/>
            <person name="Wu H.C."/>
            <person name="Kim C.J."/>
            <person name="Nguyen M."/>
            <person name="Pham P.K."/>
            <person name="Cheuk R.F."/>
            <person name="Karlin-Newmann G."/>
            <person name="Liu S.X."/>
            <person name="Lam B."/>
            <person name="Sakano H."/>
            <person name="Wu T."/>
            <person name="Yu G."/>
            <person name="Miranda M."/>
            <person name="Quach H.L."/>
            <person name="Tripp M."/>
            <person name="Chang C.H."/>
            <person name="Lee J.M."/>
            <person name="Toriumi M.J."/>
            <person name="Chan M.M."/>
            <person name="Tang C.C."/>
            <person name="Onodera C.S."/>
            <person name="Deng J.M."/>
            <person name="Akiyama K."/>
            <person name="Ansari Y."/>
            <person name="Arakawa T."/>
            <person name="Banh J."/>
            <person name="Banno F."/>
            <person name="Bowser L."/>
            <person name="Brooks S.Y."/>
            <person name="Carninci P."/>
            <person name="Chao Q."/>
            <person name="Choy N."/>
            <person name="Enju A."/>
            <person name="Goldsmith A.D."/>
            <person name="Gurjal M."/>
            <person name="Hansen N.F."/>
            <person name="Hayashizaki Y."/>
            <person name="Johnson-Hopson C."/>
            <person name="Hsuan V.W."/>
            <person name="Iida K."/>
            <person name="Karnes M."/>
            <person name="Khan S."/>
            <person name="Koesema E."/>
            <person name="Ishida J."/>
            <person name="Jiang P.X."/>
            <person name="Jones T."/>
            <person name="Kawai J."/>
            <person name="Kamiya A."/>
            <person name="Meyers C."/>
            <person name="Nakajima M."/>
            <person name="Narusaka M."/>
            <person name="Seki M."/>
            <person name="Sakurai T."/>
            <person name="Satou M."/>
            <person name="Tamse R."/>
            <person name="Vaysberg M."/>
            <person name="Wallender E.K."/>
            <person name="Wong C."/>
            <person name="Yamamura Y."/>
            <person name="Yuan S."/>
            <person name="Shinozaki K."/>
            <person name="Davis R.W."/>
            <person name="Theologis A."/>
            <person name="Ecker J.R."/>
        </authorList>
    </citation>
    <scope>NUCLEOTIDE SEQUENCE [LARGE SCALE MRNA]</scope>
    <source>
        <strain>cv. Columbia</strain>
    </source>
</reference>
<reference key="4">
    <citation type="journal article" date="2018" name="Front. Plant Sci.">
        <title>Arabidopsis Kunitz trypsin inhibitors in defense against spider mites.</title>
        <authorList>
            <person name="Arnaiz A."/>
            <person name="Talavera-Mateo L."/>
            <person name="Gonzalez-Melendi P."/>
            <person name="Martinez M."/>
            <person name="Diaz I."/>
            <person name="Santamaria M.E."/>
        </authorList>
    </citation>
    <scope>FUNCTION</scope>
    <scope>SUBCELLULAR LOCATION</scope>
    <scope>INDUCTION BY SPIDER MITES</scope>
    <scope>GENE FAMILY</scope>
    <scope>NOMENCLATURE</scope>
</reference>
<sequence length="196" mass="22082">MSSLLYIFLLLAVFISHRGVTTEAAVEPVKDINGKSLLTGVNYYILPVIRGRGGGLTMSNLKTETCPTSVIQDQFEVSQGLPVKFSPYDKSRTIPVSTDVNIKFSPTSIWELANFDETTKQWFISTCGVEGNPGQKTVDNWFKIDKFEKDYKIRFCPTVCNFCKVICRDVGVFVQDGKRRLALSDVPLKVMFKRAY</sequence>
<name>KTI5_ARATH</name>
<feature type="signal peptide" evidence="2">
    <location>
        <begin position="1"/>
        <end position="19"/>
    </location>
</feature>
<feature type="chain" id="PRO_5007717122" description="Kunitz trypsin inhibitor 5">
    <location>
        <begin position="20"/>
        <end position="196"/>
    </location>
</feature>
<feature type="disulfide bond" evidence="1">
    <location>
        <begin position="156"/>
        <end position="167"/>
    </location>
</feature>
<organism>
    <name type="scientific">Arabidopsis thaliana</name>
    <name type="common">Mouse-ear cress</name>
    <dbReference type="NCBI Taxonomy" id="3702"/>
    <lineage>
        <taxon>Eukaryota</taxon>
        <taxon>Viridiplantae</taxon>
        <taxon>Streptophyta</taxon>
        <taxon>Embryophyta</taxon>
        <taxon>Tracheophyta</taxon>
        <taxon>Spermatophyta</taxon>
        <taxon>Magnoliopsida</taxon>
        <taxon>eudicotyledons</taxon>
        <taxon>Gunneridae</taxon>
        <taxon>Pentapetalae</taxon>
        <taxon>rosids</taxon>
        <taxon>malvids</taxon>
        <taxon>Brassicales</taxon>
        <taxon>Brassicaceae</taxon>
        <taxon>Camelineae</taxon>
        <taxon>Arabidopsis</taxon>
    </lineage>
</organism>
<dbReference type="EMBL" id="AC034106">
    <property type="protein sequence ID" value="AAF97266.1"/>
    <property type="molecule type" value="Genomic_DNA"/>
</dbReference>
<dbReference type="EMBL" id="CP002684">
    <property type="protein sequence ID" value="AEE29645.1"/>
    <property type="molecule type" value="Genomic_DNA"/>
</dbReference>
<dbReference type="EMBL" id="AF332416">
    <property type="protein sequence ID" value="AAG48779.1"/>
    <property type="molecule type" value="mRNA"/>
</dbReference>
<dbReference type="EMBL" id="AF370535">
    <property type="protein sequence ID" value="AAK48962.1"/>
    <property type="molecule type" value="mRNA"/>
</dbReference>
<dbReference type="EMBL" id="AF410274">
    <property type="protein sequence ID" value="AAK95260.1"/>
    <property type="molecule type" value="mRNA"/>
</dbReference>
<dbReference type="EMBL" id="AY081529">
    <property type="protein sequence ID" value="AAM10091.1"/>
    <property type="molecule type" value="mRNA"/>
</dbReference>
<dbReference type="EMBL" id="AY097369">
    <property type="protein sequence ID" value="AAM19885.1"/>
    <property type="molecule type" value="mRNA"/>
</dbReference>
<dbReference type="PIR" id="G86313">
    <property type="entry name" value="G86313"/>
</dbReference>
<dbReference type="RefSeq" id="NP_173228.1">
    <property type="nucleotide sequence ID" value="NM_101649.2"/>
</dbReference>
<dbReference type="SMR" id="Q9LMU2"/>
<dbReference type="FunCoup" id="Q9LMU2">
    <property type="interactions" value="140"/>
</dbReference>
<dbReference type="IntAct" id="Q9LMU2">
    <property type="interactions" value="2"/>
</dbReference>
<dbReference type="STRING" id="3702.Q9LMU2"/>
<dbReference type="MEROPS" id="I03.030"/>
<dbReference type="PaxDb" id="3702-AT1G17860.1"/>
<dbReference type="ProteomicsDB" id="237035"/>
<dbReference type="EnsemblPlants" id="AT1G17860.1">
    <property type="protein sequence ID" value="AT1G17860.1"/>
    <property type="gene ID" value="AT1G17860"/>
</dbReference>
<dbReference type="GeneID" id="838365"/>
<dbReference type="Gramene" id="AT1G17860.1">
    <property type="protein sequence ID" value="AT1G17860.1"/>
    <property type="gene ID" value="AT1G17860"/>
</dbReference>
<dbReference type="KEGG" id="ath:AT1G17860"/>
<dbReference type="Araport" id="AT1G17860"/>
<dbReference type="TAIR" id="AT1G17860">
    <property type="gene designation" value="ATKTI5"/>
</dbReference>
<dbReference type="eggNOG" id="ENOG502QWSQ">
    <property type="taxonomic scope" value="Eukaryota"/>
</dbReference>
<dbReference type="HOGENOM" id="CLU_090145_1_0_1"/>
<dbReference type="InParanoid" id="Q9LMU2"/>
<dbReference type="OMA" id="CDICRVM"/>
<dbReference type="PhylomeDB" id="Q9LMU2"/>
<dbReference type="PRO" id="PR:Q9LMU2"/>
<dbReference type="Proteomes" id="UP000006548">
    <property type="component" value="Chromosome 1"/>
</dbReference>
<dbReference type="ExpressionAtlas" id="Q9LMU2">
    <property type="expression patterns" value="baseline and differential"/>
</dbReference>
<dbReference type="GO" id="GO:0048046">
    <property type="term" value="C:apoplast"/>
    <property type="evidence" value="ECO:0007005"/>
    <property type="project" value="TAIR"/>
</dbReference>
<dbReference type="GO" id="GO:0005783">
    <property type="term" value="C:endoplasmic reticulum"/>
    <property type="evidence" value="ECO:0000314"/>
    <property type="project" value="UniProtKB"/>
</dbReference>
<dbReference type="GO" id="GO:0099503">
    <property type="term" value="C:secretory vesicle"/>
    <property type="evidence" value="ECO:0007005"/>
    <property type="project" value="TAIR"/>
</dbReference>
<dbReference type="GO" id="GO:0004869">
    <property type="term" value="F:cysteine-type endopeptidase inhibitor activity"/>
    <property type="evidence" value="ECO:0007669"/>
    <property type="project" value="UniProtKB-KW"/>
</dbReference>
<dbReference type="GO" id="GO:0030414">
    <property type="term" value="F:peptidase inhibitor activity"/>
    <property type="evidence" value="ECO:0000314"/>
    <property type="project" value="UniProtKB"/>
</dbReference>
<dbReference type="GO" id="GO:0004867">
    <property type="term" value="F:serine-type endopeptidase inhibitor activity"/>
    <property type="evidence" value="ECO:0007669"/>
    <property type="project" value="UniProtKB-KW"/>
</dbReference>
<dbReference type="GO" id="GO:0006952">
    <property type="term" value="P:defense response"/>
    <property type="evidence" value="ECO:0007669"/>
    <property type="project" value="UniProtKB-KW"/>
</dbReference>
<dbReference type="GO" id="GO:0010466">
    <property type="term" value="P:negative regulation of peptidase activity"/>
    <property type="evidence" value="ECO:0000314"/>
    <property type="project" value="UniProtKB"/>
</dbReference>
<dbReference type="GO" id="GO:0009625">
    <property type="term" value="P:response to insect"/>
    <property type="evidence" value="ECO:0000315"/>
    <property type="project" value="TAIR"/>
</dbReference>
<dbReference type="CDD" id="cd23375">
    <property type="entry name" value="beta-trefoil_STI_VvMLP-like"/>
    <property type="match status" value="1"/>
</dbReference>
<dbReference type="FunFam" id="2.80.10.50:FF:000113">
    <property type="entry name" value="Kunitz-type serine protease inhibitor DrTI"/>
    <property type="match status" value="1"/>
</dbReference>
<dbReference type="Gene3D" id="2.80.10.50">
    <property type="match status" value="1"/>
</dbReference>
<dbReference type="InterPro" id="IPR011065">
    <property type="entry name" value="Kunitz_inhibitor_STI-like_sf"/>
</dbReference>
<dbReference type="InterPro" id="IPR002160">
    <property type="entry name" value="Prot_inh_Kunz-lg"/>
</dbReference>
<dbReference type="PANTHER" id="PTHR33107">
    <property type="entry name" value="KUNITZ TRYPSIN INHIBITOR 2"/>
    <property type="match status" value="1"/>
</dbReference>
<dbReference type="PANTHER" id="PTHR33107:SF5">
    <property type="entry name" value="KUNITZ TRYPSIN INHIBITOR 5"/>
    <property type="match status" value="1"/>
</dbReference>
<dbReference type="Pfam" id="PF00197">
    <property type="entry name" value="Kunitz_legume"/>
    <property type="match status" value="1"/>
</dbReference>
<dbReference type="PRINTS" id="PR00291">
    <property type="entry name" value="KUNITZINHBTR"/>
</dbReference>
<dbReference type="SMART" id="SM00452">
    <property type="entry name" value="STI"/>
    <property type="match status" value="1"/>
</dbReference>
<dbReference type="SUPFAM" id="SSF50386">
    <property type="entry name" value="STI-like"/>
    <property type="match status" value="1"/>
</dbReference>
<dbReference type="PROSITE" id="PS00283">
    <property type="entry name" value="SOYBEAN_KUNITZ"/>
    <property type="match status" value="1"/>
</dbReference>
<comment type="function">
    <text evidence="3">Can inhibit both serine proteases and cysteine proteases (PubMed:30042779). May be involved in the modulation of the proteases that participate in the hydrolysis of dietary proteins in the gut of spider mites (PubMed:30042779).</text>
</comment>
<comment type="subcellular location">
    <subcellularLocation>
        <location evidence="3">Endoplasmic reticulum</location>
    </subcellularLocation>
</comment>
<comment type="induction">
    <text evidence="3">Induced by infestation with spider mites.</text>
</comment>
<comment type="similarity">
    <text evidence="5">Belongs to the protease inhibitor I3 (leguminous Kunitz-type inhibitor) family.</text>
</comment>
<gene>
    <name evidence="4" type="primary">KTI5</name>
    <name evidence="5" type="synonym">KTI2</name>
    <name evidence="6" type="ordered locus">At1g17860</name>
    <name evidence="7" type="ORF">F2H15.9</name>
</gene>
<accession>Q9LMU2</accession>
<evidence type="ECO:0000250" key="1">
    <source>
        <dbReference type="UniProtKB" id="P01070"/>
    </source>
</evidence>
<evidence type="ECO:0000255" key="2"/>
<evidence type="ECO:0000269" key="3">
    <source>
    </source>
</evidence>
<evidence type="ECO:0000303" key="4">
    <source>
    </source>
</evidence>
<evidence type="ECO:0000305" key="5"/>
<evidence type="ECO:0000312" key="6">
    <source>
        <dbReference type="Araport" id="AT1G17860"/>
    </source>
</evidence>
<evidence type="ECO:0000312" key="7">
    <source>
        <dbReference type="EMBL" id="AAF97266.1"/>
    </source>
</evidence>
<keyword id="KW-1015">Disulfide bond</keyword>
<keyword id="KW-0256">Endoplasmic reticulum</keyword>
<keyword id="KW-0611">Plant defense</keyword>
<keyword id="KW-0646">Protease inhibitor</keyword>
<keyword id="KW-1185">Reference proteome</keyword>
<keyword id="KW-0722">Serine protease inhibitor</keyword>
<keyword id="KW-0732">Signal</keyword>
<keyword id="KW-0789">Thiol protease inhibitor</keyword>
<proteinExistence type="evidence at transcript level"/>